<sequence>MRSYEKSKAAFEEAQRVMPGGVNSPVRAFKSVNMDPIFMERGKGSKIYDIDGNEYIDYVLSWGPLILGHSNEKVVKEIQKAAEHGTSFGAPTELETELAELVIDRVPSIEIVRMVSSGTEATMSALRLARGYTGRNKIVKFEGCYHGHGDSLLIKAGSGVATLGLPDSPGVPESIAKNTITVPYNDLESMKLVFQEFGDDIAGVIVEPVAGNMGVVPPVKGFLEGLRELTETHGALLIFDEVMTGFRVDYNCAQGYFGVTPDLTCLGKVIGGGLPVGAYGGKAEIMEKIAPSGPIYQAGTLSGNPLAMTAGLETLKQLTPESYREFSRKADRLEKGISEAAEKNGIPCTFNRAGSMIGFFFTNGPVINYDTAKQSDLGLFAEYYKGMADEGVFLPPSQFEGLFLSTAHTDDDIEHTIKAAERVFERISRSR</sequence>
<organism>
    <name type="scientific">Bacillus licheniformis (strain ATCC 14580 / DSM 13 / JCM 2505 / CCUG 7422 / NBRC 12200 / NCIMB 9375 / NCTC 10341 / NRRL NRS-1264 / Gibson 46)</name>
    <dbReference type="NCBI Taxonomy" id="279010"/>
    <lineage>
        <taxon>Bacteria</taxon>
        <taxon>Bacillati</taxon>
        <taxon>Bacillota</taxon>
        <taxon>Bacilli</taxon>
        <taxon>Bacillales</taxon>
        <taxon>Bacillaceae</taxon>
        <taxon>Bacillus</taxon>
    </lineage>
</organism>
<accession>Q65GK4</accession>
<accession>Q62S12</accession>
<feature type="chain" id="PRO_0000243547" description="Glutamate-1-semialdehyde 2,1-aminomutase 2">
    <location>
        <begin position="1"/>
        <end position="431"/>
    </location>
</feature>
<feature type="modified residue" description="N6-(pyridoxal phosphate)lysine" evidence="1">
    <location>
        <position position="268"/>
    </location>
</feature>
<reference key="1">
    <citation type="journal article" date="2004" name="J. Mol. Microbiol. Biotechnol.">
        <title>The complete genome sequence of Bacillus licheniformis DSM13, an organism with great industrial potential.</title>
        <authorList>
            <person name="Veith B."/>
            <person name="Herzberg C."/>
            <person name="Steckel S."/>
            <person name="Feesche J."/>
            <person name="Maurer K.H."/>
            <person name="Ehrenreich P."/>
            <person name="Baeumer S."/>
            <person name="Henne A."/>
            <person name="Liesegang H."/>
            <person name="Merkl R."/>
            <person name="Ehrenreich A."/>
            <person name="Gottschalk G."/>
        </authorList>
    </citation>
    <scope>NUCLEOTIDE SEQUENCE [LARGE SCALE GENOMIC DNA]</scope>
    <source>
        <strain>ATCC 14580 / DSM 13 / JCM 2505 / CCUG 7422 / NBRC 12200 / NCIMB 9375 / NCTC 10341 / NRRL NRS-1264 / Gibson 46</strain>
    </source>
</reference>
<reference key="2">
    <citation type="journal article" date="2004" name="Genome Biol.">
        <title>Complete genome sequence of the industrial bacterium Bacillus licheniformis and comparisons with closely related Bacillus species.</title>
        <authorList>
            <person name="Rey M.W."/>
            <person name="Ramaiya P."/>
            <person name="Nelson B.A."/>
            <person name="Brody-Karpin S.D."/>
            <person name="Zaretsky E.J."/>
            <person name="Tang M."/>
            <person name="Lopez de Leon A."/>
            <person name="Xiang H."/>
            <person name="Gusti V."/>
            <person name="Clausen I.G."/>
            <person name="Olsen P.B."/>
            <person name="Rasmussen M.D."/>
            <person name="Andersen J.T."/>
            <person name="Joergensen P.L."/>
            <person name="Larsen T.S."/>
            <person name="Sorokin A."/>
            <person name="Bolotin A."/>
            <person name="Lapidus A."/>
            <person name="Galleron N."/>
            <person name="Ehrlich S.D."/>
            <person name="Berka R.M."/>
        </authorList>
    </citation>
    <scope>NUCLEOTIDE SEQUENCE [LARGE SCALE GENOMIC DNA]</scope>
    <source>
        <strain>ATCC 14580 / DSM 13 / JCM 2505 / CCUG 7422 / NBRC 12200 / NCIMB 9375 / NCTC 10341 / NRRL NRS-1264 / Gibson 46</strain>
    </source>
</reference>
<keyword id="KW-0963">Cytoplasm</keyword>
<keyword id="KW-0413">Isomerase</keyword>
<keyword id="KW-0627">Porphyrin biosynthesis</keyword>
<keyword id="KW-0663">Pyridoxal phosphate</keyword>
<keyword id="KW-1185">Reference proteome</keyword>
<name>GSA2_BACLD</name>
<comment type="catalytic activity">
    <reaction evidence="1">
        <text>(S)-4-amino-5-oxopentanoate = 5-aminolevulinate</text>
        <dbReference type="Rhea" id="RHEA:14265"/>
        <dbReference type="ChEBI" id="CHEBI:57501"/>
        <dbReference type="ChEBI" id="CHEBI:356416"/>
        <dbReference type="EC" id="5.4.3.8"/>
    </reaction>
</comment>
<comment type="cofactor">
    <cofactor evidence="1">
        <name>pyridoxal 5'-phosphate</name>
        <dbReference type="ChEBI" id="CHEBI:597326"/>
    </cofactor>
</comment>
<comment type="pathway">
    <text evidence="1">Porphyrin-containing compound metabolism; protoporphyrin-IX biosynthesis; 5-aminolevulinate from L-glutamyl-tRNA(Glu): step 2/2.</text>
</comment>
<comment type="subunit">
    <text evidence="1">Homodimer.</text>
</comment>
<comment type="subcellular location">
    <subcellularLocation>
        <location evidence="1">Cytoplasm</location>
    </subcellularLocation>
</comment>
<comment type="similarity">
    <text evidence="1">Belongs to the class-III pyridoxal-phosphate-dependent aminotransferase family. HemL subfamily.</text>
</comment>
<dbReference type="EC" id="5.4.3.8" evidence="1"/>
<dbReference type="EMBL" id="AE017333">
    <property type="protein sequence ID" value="AAU41810.1"/>
    <property type="molecule type" value="Genomic_DNA"/>
</dbReference>
<dbReference type="EMBL" id="CP000002">
    <property type="protein sequence ID" value="AAU24448.1"/>
    <property type="molecule type" value="Genomic_DNA"/>
</dbReference>
<dbReference type="SMR" id="Q65GK4"/>
<dbReference type="STRING" id="279010.BL00628"/>
<dbReference type="KEGG" id="bld:BLi02942"/>
<dbReference type="KEGG" id="bli:BL00628"/>
<dbReference type="eggNOG" id="COG0001">
    <property type="taxonomic scope" value="Bacteria"/>
</dbReference>
<dbReference type="HOGENOM" id="CLU_016922_1_5_9"/>
<dbReference type="UniPathway" id="UPA00251">
    <property type="reaction ID" value="UER00317"/>
</dbReference>
<dbReference type="Proteomes" id="UP000000606">
    <property type="component" value="Chromosome"/>
</dbReference>
<dbReference type="GO" id="GO:0005737">
    <property type="term" value="C:cytoplasm"/>
    <property type="evidence" value="ECO:0007669"/>
    <property type="project" value="UniProtKB-SubCell"/>
</dbReference>
<dbReference type="GO" id="GO:0042286">
    <property type="term" value="F:glutamate-1-semialdehyde 2,1-aminomutase activity"/>
    <property type="evidence" value="ECO:0007669"/>
    <property type="project" value="UniProtKB-UniRule"/>
</dbReference>
<dbReference type="GO" id="GO:0030170">
    <property type="term" value="F:pyridoxal phosphate binding"/>
    <property type="evidence" value="ECO:0007669"/>
    <property type="project" value="InterPro"/>
</dbReference>
<dbReference type="GO" id="GO:0008483">
    <property type="term" value="F:transaminase activity"/>
    <property type="evidence" value="ECO:0007669"/>
    <property type="project" value="InterPro"/>
</dbReference>
<dbReference type="GO" id="GO:0006782">
    <property type="term" value="P:protoporphyrinogen IX biosynthetic process"/>
    <property type="evidence" value="ECO:0007669"/>
    <property type="project" value="UniProtKB-UniRule"/>
</dbReference>
<dbReference type="CDD" id="cd00610">
    <property type="entry name" value="OAT_like"/>
    <property type="match status" value="1"/>
</dbReference>
<dbReference type="FunFam" id="3.40.640.10:FF:000021">
    <property type="entry name" value="Glutamate-1-semialdehyde 2,1-aminomutase"/>
    <property type="match status" value="1"/>
</dbReference>
<dbReference type="Gene3D" id="3.90.1150.10">
    <property type="entry name" value="Aspartate Aminotransferase, domain 1"/>
    <property type="match status" value="1"/>
</dbReference>
<dbReference type="Gene3D" id="3.40.640.10">
    <property type="entry name" value="Type I PLP-dependent aspartate aminotransferase-like (Major domain)"/>
    <property type="match status" value="1"/>
</dbReference>
<dbReference type="HAMAP" id="MF_00375">
    <property type="entry name" value="HemL_aminotrans_3"/>
    <property type="match status" value="1"/>
</dbReference>
<dbReference type="InterPro" id="IPR004639">
    <property type="entry name" value="4pyrrol_synth_GluAld_NH2Trfase"/>
</dbReference>
<dbReference type="InterPro" id="IPR005814">
    <property type="entry name" value="Aminotrans_3"/>
</dbReference>
<dbReference type="InterPro" id="IPR049704">
    <property type="entry name" value="Aminotrans_3_PPA_site"/>
</dbReference>
<dbReference type="InterPro" id="IPR015424">
    <property type="entry name" value="PyrdxlP-dep_Trfase"/>
</dbReference>
<dbReference type="InterPro" id="IPR015421">
    <property type="entry name" value="PyrdxlP-dep_Trfase_major"/>
</dbReference>
<dbReference type="InterPro" id="IPR015422">
    <property type="entry name" value="PyrdxlP-dep_Trfase_small"/>
</dbReference>
<dbReference type="NCBIfam" id="TIGR00713">
    <property type="entry name" value="hemL"/>
    <property type="match status" value="1"/>
</dbReference>
<dbReference type="NCBIfam" id="NF000818">
    <property type="entry name" value="PRK00062.1"/>
    <property type="match status" value="1"/>
</dbReference>
<dbReference type="PANTHER" id="PTHR43713">
    <property type="entry name" value="GLUTAMATE-1-SEMIALDEHYDE 2,1-AMINOMUTASE"/>
    <property type="match status" value="1"/>
</dbReference>
<dbReference type="PANTHER" id="PTHR43713:SF3">
    <property type="entry name" value="GLUTAMATE-1-SEMIALDEHYDE 2,1-AMINOMUTASE 1, CHLOROPLASTIC-RELATED"/>
    <property type="match status" value="1"/>
</dbReference>
<dbReference type="Pfam" id="PF00202">
    <property type="entry name" value="Aminotran_3"/>
    <property type="match status" value="1"/>
</dbReference>
<dbReference type="SUPFAM" id="SSF53383">
    <property type="entry name" value="PLP-dependent transferases"/>
    <property type="match status" value="1"/>
</dbReference>
<dbReference type="PROSITE" id="PS00600">
    <property type="entry name" value="AA_TRANSFER_CLASS_3"/>
    <property type="match status" value="1"/>
</dbReference>
<proteinExistence type="inferred from homology"/>
<evidence type="ECO:0000255" key="1">
    <source>
        <dbReference type="HAMAP-Rule" id="MF_00375"/>
    </source>
</evidence>
<gene>
    <name evidence="1" type="primary">hemL2</name>
    <name type="ordered locus">BLi02942</name>
    <name type="ordered locus">BL00628</name>
</gene>
<protein>
    <recommendedName>
        <fullName evidence="1">Glutamate-1-semialdehyde 2,1-aminomutase 2</fullName>
        <shortName evidence="1">GSA 2</shortName>
        <ecNumber evidence="1">5.4.3.8</ecNumber>
    </recommendedName>
    <alternativeName>
        <fullName evidence="1">Glutamate-1-semialdehyde aminotransferase 2</fullName>
        <shortName evidence="1">GSA-AT 2</shortName>
    </alternativeName>
</protein>